<keyword id="KW-0963">Cytoplasm</keyword>
<keyword id="KW-0489">Methyltransferase</keyword>
<keyword id="KW-1185">Reference proteome</keyword>
<keyword id="KW-0949">S-adenosyl-L-methionine</keyword>
<keyword id="KW-0808">Transferase</keyword>
<keyword id="KW-0819">tRNA processing</keyword>
<organism>
    <name type="scientific">Methylococcus capsulatus (strain ATCC 33009 / NCIMB 11132 / Bath)</name>
    <dbReference type="NCBI Taxonomy" id="243233"/>
    <lineage>
        <taxon>Bacteria</taxon>
        <taxon>Pseudomonadati</taxon>
        <taxon>Pseudomonadota</taxon>
        <taxon>Gammaproteobacteria</taxon>
        <taxon>Methylococcales</taxon>
        <taxon>Methylococcaceae</taxon>
        <taxon>Methylococcus</taxon>
    </lineage>
</organism>
<dbReference type="EC" id="2.1.1.228" evidence="1"/>
<dbReference type="EMBL" id="AE017282">
    <property type="protein sequence ID" value="AAU90470.1"/>
    <property type="molecule type" value="Genomic_DNA"/>
</dbReference>
<dbReference type="RefSeq" id="WP_010959754.1">
    <property type="nucleotide sequence ID" value="NC_002977.6"/>
</dbReference>
<dbReference type="SMR" id="Q60BS1"/>
<dbReference type="STRING" id="243233.MCA0394"/>
<dbReference type="GeneID" id="88222736"/>
<dbReference type="KEGG" id="mca:MCA0394"/>
<dbReference type="eggNOG" id="COG0336">
    <property type="taxonomic scope" value="Bacteria"/>
</dbReference>
<dbReference type="HOGENOM" id="CLU_047363_0_1_6"/>
<dbReference type="Proteomes" id="UP000006821">
    <property type="component" value="Chromosome"/>
</dbReference>
<dbReference type="GO" id="GO:0005829">
    <property type="term" value="C:cytosol"/>
    <property type="evidence" value="ECO:0007669"/>
    <property type="project" value="TreeGrafter"/>
</dbReference>
<dbReference type="GO" id="GO:0052906">
    <property type="term" value="F:tRNA (guanine(37)-N1)-methyltransferase activity"/>
    <property type="evidence" value="ECO:0007669"/>
    <property type="project" value="UniProtKB-UniRule"/>
</dbReference>
<dbReference type="GO" id="GO:0002939">
    <property type="term" value="P:tRNA N1-guanine methylation"/>
    <property type="evidence" value="ECO:0007669"/>
    <property type="project" value="TreeGrafter"/>
</dbReference>
<dbReference type="CDD" id="cd18080">
    <property type="entry name" value="TrmD-like"/>
    <property type="match status" value="1"/>
</dbReference>
<dbReference type="FunFam" id="1.10.1270.20:FF:000001">
    <property type="entry name" value="tRNA (guanine-N(1)-)-methyltransferase"/>
    <property type="match status" value="1"/>
</dbReference>
<dbReference type="FunFam" id="3.40.1280.10:FF:000001">
    <property type="entry name" value="tRNA (guanine-N(1)-)-methyltransferase"/>
    <property type="match status" value="1"/>
</dbReference>
<dbReference type="Gene3D" id="3.40.1280.10">
    <property type="match status" value="1"/>
</dbReference>
<dbReference type="Gene3D" id="1.10.1270.20">
    <property type="entry name" value="tRNA(m1g37)methyltransferase, domain 2"/>
    <property type="match status" value="1"/>
</dbReference>
<dbReference type="HAMAP" id="MF_00605">
    <property type="entry name" value="TrmD"/>
    <property type="match status" value="1"/>
</dbReference>
<dbReference type="InterPro" id="IPR029028">
    <property type="entry name" value="Alpha/beta_knot_MTases"/>
</dbReference>
<dbReference type="InterPro" id="IPR023148">
    <property type="entry name" value="tRNA_m1G_MeTrfase_C_sf"/>
</dbReference>
<dbReference type="InterPro" id="IPR002649">
    <property type="entry name" value="tRNA_m1G_MeTrfase_TrmD"/>
</dbReference>
<dbReference type="InterPro" id="IPR029026">
    <property type="entry name" value="tRNA_m1G_MTases_N"/>
</dbReference>
<dbReference type="InterPro" id="IPR016009">
    <property type="entry name" value="tRNA_MeTrfase_TRMD/TRM10"/>
</dbReference>
<dbReference type="NCBIfam" id="NF000648">
    <property type="entry name" value="PRK00026.1"/>
    <property type="match status" value="1"/>
</dbReference>
<dbReference type="NCBIfam" id="TIGR00088">
    <property type="entry name" value="trmD"/>
    <property type="match status" value="1"/>
</dbReference>
<dbReference type="PANTHER" id="PTHR46417">
    <property type="entry name" value="TRNA (GUANINE-N(1)-)-METHYLTRANSFERASE"/>
    <property type="match status" value="1"/>
</dbReference>
<dbReference type="PANTHER" id="PTHR46417:SF1">
    <property type="entry name" value="TRNA (GUANINE-N(1)-)-METHYLTRANSFERASE"/>
    <property type="match status" value="1"/>
</dbReference>
<dbReference type="Pfam" id="PF01746">
    <property type="entry name" value="tRNA_m1G_MT"/>
    <property type="match status" value="1"/>
</dbReference>
<dbReference type="PIRSF" id="PIRSF000386">
    <property type="entry name" value="tRNA_mtase"/>
    <property type="match status" value="1"/>
</dbReference>
<dbReference type="SUPFAM" id="SSF75217">
    <property type="entry name" value="alpha/beta knot"/>
    <property type="match status" value="1"/>
</dbReference>
<sequence>MRFDIVTLFPEMVRDAARYGVTGRALAAGKVSLEVWNPRDFTRDRHRTVDDRPYGGGPGMVMKVEPLRDAIRAAKGQATPGARVVLMSPQGTRLDQAAVRRFAAAPGLILVAGRYEGVDERLIETEIDEEWSIGDYVLSGGELPALVVFDAVVRLLPGVLGDAESAEQDSHAEGLLDHPHYTRPERVAGRDVPAVLQSGNHAAIGRWRLKQALGKTWLKRPDLLACRVMTPEQLELLDEFKREFELQKNRG</sequence>
<reference key="1">
    <citation type="journal article" date="2004" name="PLoS Biol.">
        <title>Genomic insights into methanotrophy: the complete genome sequence of Methylococcus capsulatus (Bath).</title>
        <authorList>
            <person name="Ward N.L."/>
            <person name="Larsen O."/>
            <person name="Sakwa J."/>
            <person name="Bruseth L."/>
            <person name="Khouri H.M."/>
            <person name="Durkin A.S."/>
            <person name="Dimitrov G."/>
            <person name="Jiang L."/>
            <person name="Scanlan D."/>
            <person name="Kang K.H."/>
            <person name="Lewis M.R."/>
            <person name="Nelson K.E."/>
            <person name="Methe B.A."/>
            <person name="Wu M."/>
            <person name="Heidelberg J.F."/>
            <person name="Paulsen I.T."/>
            <person name="Fouts D.E."/>
            <person name="Ravel J."/>
            <person name="Tettelin H."/>
            <person name="Ren Q."/>
            <person name="Read T.D."/>
            <person name="DeBoy R.T."/>
            <person name="Seshadri R."/>
            <person name="Salzberg S.L."/>
            <person name="Jensen H.B."/>
            <person name="Birkeland N.K."/>
            <person name="Nelson W.C."/>
            <person name="Dodson R.J."/>
            <person name="Grindhaug S.H."/>
            <person name="Holt I.E."/>
            <person name="Eidhammer I."/>
            <person name="Jonasen I."/>
            <person name="Vanaken S."/>
            <person name="Utterback T.R."/>
            <person name="Feldblyum T.V."/>
            <person name="Fraser C.M."/>
            <person name="Lillehaug J.R."/>
            <person name="Eisen J.A."/>
        </authorList>
    </citation>
    <scope>NUCLEOTIDE SEQUENCE [LARGE SCALE GENOMIC DNA]</scope>
    <source>
        <strain>ATCC 33009 / NCIMB 11132 / Bath</strain>
    </source>
</reference>
<feature type="chain" id="PRO_0000060406" description="tRNA (guanine-N(1)-)-methyltransferase">
    <location>
        <begin position="1"/>
        <end position="251"/>
    </location>
</feature>
<feature type="binding site" evidence="1">
    <location>
        <position position="113"/>
    </location>
    <ligand>
        <name>S-adenosyl-L-methionine</name>
        <dbReference type="ChEBI" id="CHEBI:59789"/>
    </ligand>
</feature>
<feature type="binding site" evidence="1">
    <location>
        <begin position="133"/>
        <end position="138"/>
    </location>
    <ligand>
        <name>S-adenosyl-L-methionine</name>
        <dbReference type="ChEBI" id="CHEBI:59789"/>
    </ligand>
</feature>
<accession>Q60BS1</accession>
<comment type="function">
    <text evidence="1">Specifically methylates guanosine-37 in various tRNAs.</text>
</comment>
<comment type="catalytic activity">
    <reaction evidence="1">
        <text>guanosine(37) in tRNA + S-adenosyl-L-methionine = N(1)-methylguanosine(37) in tRNA + S-adenosyl-L-homocysteine + H(+)</text>
        <dbReference type="Rhea" id="RHEA:36899"/>
        <dbReference type="Rhea" id="RHEA-COMP:10145"/>
        <dbReference type="Rhea" id="RHEA-COMP:10147"/>
        <dbReference type="ChEBI" id="CHEBI:15378"/>
        <dbReference type="ChEBI" id="CHEBI:57856"/>
        <dbReference type="ChEBI" id="CHEBI:59789"/>
        <dbReference type="ChEBI" id="CHEBI:73542"/>
        <dbReference type="ChEBI" id="CHEBI:74269"/>
        <dbReference type="EC" id="2.1.1.228"/>
    </reaction>
</comment>
<comment type="subunit">
    <text evidence="1">Homodimer.</text>
</comment>
<comment type="subcellular location">
    <subcellularLocation>
        <location evidence="1">Cytoplasm</location>
    </subcellularLocation>
</comment>
<comment type="similarity">
    <text evidence="1">Belongs to the RNA methyltransferase TrmD family.</text>
</comment>
<evidence type="ECO:0000255" key="1">
    <source>
        <dbReference type="HAMAP-Rule" id="MF_00605"/>
    </source>
</evidence>
<name>TRMD_METCA</name>
<protein>
    <recommendedName>
        <fullName evidence="1">tRNA (guanine-N(1)-)-methyltransferase</fullName>
        <ecNumber evidence="1">2.1.1.228</ecNumber>
    </recommendedName>
    <alternativeName>
        <fullName evidence="1">M1G-methyltransferase</fullName>
    </alternativeName>
    <alternativeName>
        <fullName evidence="1">tRNA [GM37] methyltransferase</fullName>
    </alternativeName>
</protein>
<gene>
    <name evidence="1" type="primary">trmD</name>
    <name type="ordered locus">MCA0394</name>
</gene>
<proteinExistence type="inferred from homology"/>